<comment type="similarity">
    <text evidence="1">Belongs to the universal ribosomal protein uS9 family.</text>
</comment>
<proteinExistence type="inferred from homology"/>
<dbReference type="EMBL" id="CP000240">
    <property type="protein sequence ID" value="ABD02548.1"/>
    <property type="molecule type" value="Genomic_DNA"/>
</dbReference>
<dbReference type="RefSeq" id="WP_011433194.1">
    <property type="nucleotide sequence ID" value="NC_007776.1"/>
</dbReference>
<dbReference type="SMR" id="Q2JL70"/>
<dbReference type="STRING" id="321332.CYB_1584"/>
<dbReference type="KEGG" id="cyb:CYB_1584"/>
<dbReference type="eggNOG" id="COG0103">
    <property type="taxonomic scope" value="Bacteria"/>
</dbReference>
<dbReference type="HOGENOM" id="CLU_046483_2_1_3"/>
<dbReference type="OrthoDB" id="9803965at2"/>
<dbReference type="Proteomes" id="UP000001938">
    <property type="component" value="Chromosome"/>
</dbReference>
<dbReference type="GO" id="GO:0005737">
    <property type="term" value="C:cytoplasm"/>
    <property type="evidence" value="ECO:0007669"/>
    <property type="project" value="UniProtKB-ARBA"/>
</dbReference>
<dbReference type="GO" id="GO:0015935">
    <property type="term" value="C:small ribosomal subunit"/>
    <property type="evidence" value="ECO:0007669"/>
    <property type="project" value="TreeGrafter"/>
</dbReference>
<dbReference type="GO" id="GO:0003723">
    <property type="term" value="F:RNA binding"/>
    <property type="evidence" value="ECO:0007669"/>
    <property type="project" value="TreeGrafter"/>
</dbReference>
<dbReference type="GO" id="GO:0003735">
    <property type="term" value="F:structural constituent of ribosome"/>
    <property type="evidence" value="ECO:0007669"/>
    <property type="project" value="InterPro"/>
</dbReference>
<dbReference type="GO" id="GO:0006412">
    <property type="term" value="P:translation"/>
    <property type="evidence" value="ECO:0007669"/>
    <property type="project" value="UniProtKB-UniRule"/>
</dbReference>
<dbReference type="FunFam" id="3.30.230.10:FF:000001">
    <property type="entry name" value="30S ribosomal protein S9"/>
    <property type="match status" value="1"/>
</dbReference>
<dbReference type="Gene3D" id="3.30.230.10">
    <property type="match status" value="1"/>
</dbReference>
<dbReference type="HAMAP" id="MF_00532_B">
    <property type="entry name" value="Ribosomal_uS9_B"/>
    <property type="match status" value="1"/>
</dbReference>
<dbReference type="InterPro" id="IPR020568">
    <property type="entry name" value="Ribosomal_Su5_D2-typ_SF"/>
</dbReference>
<dbReference type="InterPro" id="IPR000754">
    <property type="entry name" value="Ribosomal_uS9"/>
</dbReference>
<dbReference type="InterPro" id="IPR023035">
    <property type="entry name" value="Ribosomal_uS9_bac/plastid"/>
</dbReference>
<dbReference type="InterPro" id="IPR020574">
    <property type="entry name" value="Ribosomal_uS9_CS"/>
</dbReference>
<dbReference type="InterPro" id="IPR014721">
    <property type="entry name" value="Ribsml_uS5_D2-typ_fold_subgr"/>
</dbReference>
<dbReference type="NCBIfam" id="NF001099">
    <property type="entry name" value="PRK00132.1"/>
    <property type="match status" value="1"/>
</dbReference>
<dbReference type="PANTHER" id="PTHR21569">
    <property type="entry name" value="RIBOSOMAL PROTEIN S9"/>
    <property type="match status" value="1"/>
</dbReference>
<dbReference type="PANTHER" id="PTHR21569:SF1">
    <property type="entry name" value="SMALL RIBOSOMAL SUBUNIT PROTEIN US9M"/>
    <property type="match status" value="1"/>
</dbReference>
<dbReference type="Pfam" id="PF00380">
    <property type="entry name" value="Ribosomal_S9"/>
    <property type="match status" value="1"/>
</dbReference>
<dbReference type="SUPFAM" id="SSF54211">
    <property type="entry name" value="Ribosomal protein S5 domain 2-like"/>
    <property type="match status" value="1"/>
</dbReference>
<dbReference type="PROSITE" id="PS00360">
    <property type="entry name" value="RIBOSOMAL_S9"/>
    <property type="match status" value="1"/>
</dbReference>
<keyword id="KW-1185">Reference proteome</keyword>
<keyword id="KW-0687">Ribonucleoprotein</keyword>
<keyword id="KW-0689">Ribosomal protein</keyword>
<evidence type="ECO:0000255" key="1">
    <source>
        <dbReference type="HAMAP-Rule" id="MF_00532"/>
    </source>
</evidence>
<evidence type="ECO:0000305" key="2"/>
<accession>Q2JL70</accession>
<organism>
    <name type="scientific">Synechococcus sp. (strain JA-2-3B'a(2-13))</name>
    <name type="common">Cyanobacteria bacterium Yellowstone B-Prime</name>
    <dbReference type="NCBI Taxonomy" id="321332"/>
    <lineage>
        <taxon>Bacteria</taxon>
        <taxon>Bacillati</taxon>
        <taxon>Cyanobacteriota</taxon>
        <taxon>Cyanophyceae</taxon>
        <taxon>Synechococcales</taxon>
        <taxon>Synechococcaceae</taxon>
        <taxon>Synechococcus</taxon>
    </lineage>
</organism>
<protein>
    <recommendedName>
        <fullName evidence="1">Small ribosomal subunit protein uS9</fullName>
    </recommendedName>
    <alternativeName>
        <fullName evidence="2">30S ribosomal protein S9</fullName>
    </alternativeName>
</protein>
<reference key="1">
    <citation type="journal article" date="2007" name="ISME J.">
        <title>Population level functional diversity in a microbial community revealed by comparative genomic and metagenomic analyses.</title>
        <authorList>
            <person name="Bhaya D."/>
            <person name="Grossman A.R."/>
            <person name="Steunou A.-S."/>
            <person name="Khuri N."/>
            <person name="Cohan F.M."/>
            <person name="Hamamura N."/>
            <person name="Melendrez M.C."/>
            <person name="Bateson M.M."/>
            <person name="Ward D.M."/>
            <person name="Heidelberg J.F."/>
        </authorList>
    </citation>
    <scope>NUCLEOTIDE SEQUENCE [LARGE SCALE GENOMIC DNA]</scope>
    <source>
        <strain>JA-2-3B'a(2-13)</strain>
    </source>
</reference>
<gene>
    <name evidence="1" type="primary">rpsI</name>
    <name evidence="1" type="synonym">rps9</name>
    <name type="ordered locus">CYB_1584</name>
</gene>
<feature type="chain" id="PRO_1000051353" description="Small ribosomal subunit protein uS9">
    <location>
        <begin position="1"/>
        <end position="136"/>
    </location>
</feature>
<name>RS9_SYNJB</name>
<sequence length="136" mass="14994">MTQASSQRAVYWGTGRRKTAVARVRLVPGTGKIIINDRPGDQYLQYQEALLASVKGPLEILGLENSYDILVRAHGGGVHGQADAIKLGVARALCEVDPANRGPLKVEGYLKRDPRAVERKKYGLRKARKAPQYSKR</sequence>